<organismHost>
    <name type="scientific">Cynomys gunnisoni</name>
    <name type="common">Gunnison's prairie dog</name>
    <name type="synonym">Spermophilus gunnisoni</name>
    <dbReference type="NCBI Taxonomy" id="45479"/>
</organismHost>
<organismHost>
    <name type="scientific">Cynomys leucurus</name>
    <name type="common">White-tailed prairie dog</name>
    <dbReference type="NCBI Taxonomy" id="99825"/>
</organismHost>
<organismHost>
    <name type="scientific">Cynomys ludovicianus</name>
    <name type="common">Black-tailed prairie dog</name>
    <dbReference type="NCBI Taxonomy" id="45480"/>
</organismHost>
<organismHost>
    <name type="scientific">Cynomys mexicanus</name>
    <name type="common">Mexican prairie dog</name>
    <dbReference type="NCBI Taxonomy" id="99826"/>
</organismHost>
<organismHost>
    <name type="scientific">Cynomys parvidens</name>
    <name type="common">Utah prairie dog</name>
    <dbReference type="NCBI Taxonomy" id="99827"/>
</organismHost>
<organismHost>
    <name type="scientific">Gliridae</name>
    <name type="common">dormice</name>
    <dbReference type="NCBI Taxonomy" id="30650"/>
</organismHost>
<organismHost>
    <name type="scientific">Heliosciurus ruwenzorii</name>
    <name type="common">Ruwenzori sun squirrel</name>
    <dbReference type="NCBI Taxonomy" id="226685"/>
</organismHost>
<organismHost>
    <name type="scientific">Homo sapiens</name>
    <name type="common">Human</name>
    <dbReference type="NCBI Taxonomy" id="9606"/>
</organismHost>
<organismHost>
    <name type="scientific">Mus musculus</name>
    <name type="common">Mouse</name>
    <dbReference type="NCBI Taxonomy" id="10090"/>
</organismHost>
<sequence>MSRGALIVFEGLDKSGKTTQCMNIMESIPANTIKYLNFPQRSTVTGKMIDDYLTRKKTYNDHIVNLLFCANRWEFASFIQEQLEQGITLIVDRYAFSGVAYATAKGASMTLSKSYESGLPKPDLVIFLESGSKEINRNIGEEIYEDVEFQQKVLQEYKKMIEEGDIHWQIISSEFEEDVKKELIKNIVIEAIHTVTGPVGQLWM</sequence>
<organism>
    <name type="scientific">Monkeypox virus</name>
    <dbReference type="NCBI Taxonomy" id="10244"/>
    <lineage>
        <taxon>Viruses</taxon>
        <taxon>Varidnaviria</taxon>
        <taxon>Bamfordvirae</taxon>
        <taxon>Nucleocytoviricota</taxon>
        <taxon>Pokkesviricetes</taxon>
        <taxon>Chitovirales</taxon>
        <taxon>Poxviridae</taxon>
        <taxon>Chordopoxvirinae</taxon>
        <taxon>Orthopoxvirus</taxon>
    </lineage>
</organism>
<reference key="1">
    <citation type="journal article" date="2022" name="J. Infect. Dis.">
        <title>Exportation of Monkeypox virus from the African continent.</title>
        <authorList>
            <person name="Mauldin M.R."/>
            <person name="McCollum A.M."/>
            <person name="Nakazawa Y.J."/>
            <person name="Mandra A."/>
            <person name="Whitehouse E.R."/>
            <person name="Davidson W."/>
            <person name="Zhao H."/>
            <person name="Gao J."/>
            <person name="Li Y."/>
            <person name="Doty J."/>
            <person name="Yinka-Ogunleye A."/>
            <person name="Akinpelu A."/>
            <person name="Aruna O."/>
            <person name="Naidoo D."/>
            <person name="Lewandowski K."/>
            <person name="Afrough B."/>
            <person name="Graham V."/>
            <person name="Aarons E."/>
            <person name="Hewson R."/>
            <person name="Vipond R."/>
            <person name="Dunning J."/>
            <person name="Chand M."/>
            <person name="Brown C."/>
            <person name="Cohen-Gihon I."/>
            <person name="Erez N."/>
            <person name="Shifman O."/>
            <person name="Israeli O."/>
            <person name="Sharon M."/>
            <person name="Schwartz E."/>
            <person name="Beth-Din A."/>
            <person name="Zvi A."/>
            <person name="Mak T.M."/>
            <person name="Ng Y.K."/>
            <person name="Cui L."/>
            <person name="Lin R.T.P."/>
            <person name="Olson V.A."/>
            <person name="Brooks T."/>
            <person name="Paran N."/>
            <person name="Ihekweazu C."/>
            <person name="Reynolds M.G."/>
        </authorList>
    </citation>
    <scope>NUCLEOTIDE SEQUENCE [LARGE SCALE GENOMIC DNA]</scope>
    <source>
        <strain>MPXV-M5312_HM12_Rivers</strain>
    </source>
</reference>
<proteinExistence type="evidence at transcript level"/>
<evidence type="ECO:0000250" key="1">
    <source>
        <dbReference type="UniProtKB" id="Q80HT9"/>
    </source>
</evidence>
<evidence type="ECO:0000305" key="2"/>
<feature type="chain" id="PRO_0000457608" description="Thymidylate kinase">
    <location>
        <begin position="1"/>
        <end position="204"/>
    </location>
</feature>
<gene>
    <name type="primary">OPG178</name>
    <name type="synonym">TMK</name>
    <name type="ORF">MPXVgp159</name>
</gene>
<keyword id="KW-0067">ATP-binding</keyword>
<keyword id="KW-0244">Early protein</keyword>
<keyword id="KW-0418">Kinase</keyword>
<keyword id="KW-0545">Nucleotide biosynthesis</keyword>
<keyword id="KW-0547">Nucleotide-binding</keyword>
<keyword id="KW-1185">Reference proteome</keyword>
<keyword id="KW-0808">Transferase</keyword>
<accession>A0A7H0DNE5</accession>
<name>KTHY_MONPV</name>
<dbReference type="EC" id="2.7.4.9"/>
<dbReference type="EMBL" id="MT903340">
    <property type="protein sequence ID" value="QNP13028.1"/>
    <property type="molecule type" value="Genomic_DNA"/>
</dbReference>
<dbReference type="RefSeq" id="YP_010377155.1">
    <property type="nucleotide sequence ID" value="NC_063383.1"/>
</dbReference>
<dbReference type="SMR" id="A0A7H0DNE5"/>
<dbReference type="GeneID" id="72551569"/>
<dbReference type="UniPathway" id="UPA00575"/>
<dbReference type="Proteomes" id="UP000516359">
    <property type="component" value="Genome"/>
</dbReference>
<dbReference type="GO" id="GO:0005524">
    <property type="term" value="F:ATP binding"/>
    <property type="evidence" value="ECO:0007669"/>
    <property type="project" value="UniProtKB-KW"/>
</dbReference>
<dbReference type="GO" id="GO:0004798">
    <property type="term" value="F:dTMP kinase activity"/>
    <property type="evidence" value="ECO:0007669"/>
    <property type="project" value="InterPro"/>
</dbReference>
<dbReference type="GO" id="GO:0004550">
    <property type="term" value="F:nucleoside diphosphate kinase activity"/>
    <property type="evidence" value="ECO:0007669"/>
    <property type="project" value="TreeGrafter"/>
</dbReference>
<dbReference type="GO" id="GO:0006233">
    <property type="term" value="P:dTDP biosynthetic process"/>
    <property type="evidence" value="ECO:0007669"/>
    <property type="project" value="InterPro"/>
</dbReference>
<dbReference type="GO" id="GO:0006235">
    <property type="term" value="P:dTTP biosynthetic process"/>
    <property type="evidence" value="ECO:0007669"/>
    <property type="project" value="UniProtKB-UniPathway"/>
</dbReference>
<dbReference type="GO" id="GO:0006227">
    <property type="term" value="P:dUDP biosynthetic process"/>
    <property type="evidence" value="ECO:0007669"/>
    <property type="project" value="TreeGrafter"/>
</dbReference>
<dbReference type="Gene3D" id="3.40.50.300">
    <property type="entry name" value="P-loop containing nucleotide triphosphate hydrolases"/>
    <property type="match status" value="1"/>
</dbReference>
<dbReference type="InterPro" id="IPR027417">
    <property type="entry name" value="P-loop_NTPase"/>
</dbReference>
<dbReference type="InterPro" id="IPR039430">
    <property type="entry name" value="Thymidylate_kin-like_dom"/>
</dbReference>
<dbReference type="InterPro" id="IPR018094">
    <property type="entry name" value="Thymidylate_kinase"/>
</dbReference>
<dbReference type="NCBIfam" id="TIGR00041">
    <property type="entry name" value="DTMP_kinase"/>
    <property type="match status" value="1"/>
</dbReference>
<dbReference type="PANTHER" id="PTHR10344">
    <property type="entry name" value="THYMIDYLATE KINASE"/>
    <property type="match status" value="1"/>
</dbReference>
<dbReference type="PANTHER" id="PTHR10344:SF1">
    <property type="entry name" value="THYMIDYLATE KINASE"/>
    <property type="match status" value="1"/>
</dbReference>
<dbReference type="Pfam" id="PF02223">
    <property type="entry name" value="Thymidylate_kin"/>
    <property type="match status" value="1"/>
</dbReference>
<dbReference type="SUPFAM" id="SSF52540">
    <property type="entry name" value="P-loop containing nucleoside triphosphate hydrolases"/>
    <property type="match status" value="1"/>
</dbReference>
<dbReference type="PROSITE" id="PS01331">
    <property type="entry name" value="THYMIDYLATE_KINASE"/>
    <property type="match status" value="1"/>
</dbReference>
<protein>
    <recommendedName>
        <fullName>Thymidylate kinase</fullName>
        <ecNumber>2.7.4.9</ecNumber>
    </recommendedName>
</protein>
<comment type="function">
    <text evidence="1">Poxvirus TMP kinase is able to phosphorylate dTMP, dUMP and also dGMP from any purine and pyrimidine nucleoside triphosphate. The large substrate specificity is explained by the presence of a canal connecting the edge of the dimer interface to the TMP base binding pocket, canal not found in the human homolog.</text>
</comment>
<comment type="catalytic activity">
    <reaction evidence="1">
        <text>dTMP + ATP = dTDP + ADP</text>
        <dbReference type="Rhea" id="RHEA:13517"/>
        <dbReference type="ChEBI" id="CHEBI:30616"/>
        <dbReference type="ChEBI" id="CHEBI:58369"/>
        <dbReference type="ChEBI" id="CHEBI:63528"/>
        <dbReference type="ChEBI" id="CHEBI:456216"/>
        <dbReference type="EC" id="2.7.4.9"/>
    </reaction>
</comment>
<comment type="pathway">
    <text evidence="1">Pyrimidine metabolism; dTTP biosynthesis.</text>
</comment>
<comment type="subunit">
    <text evidence="1">Homodimer; the dimer arrangement is orthogonal and not antiparallel as in human enzyme.</text>
</comment>
<comment type="induction">
    <text>Expressed in the early phase of the viral replicative cycle.</text>
</comment>
<comment type="similarity">
    <text evidence="2">Belongs to the thymidylate kinase family.</text>
</comment>